<organism>
    <name type="scientific">Ornithorhynchus anatinus</name>
    <name type="common">Duckbill platypus</name>
    <dbReference type="NCBI Taxonomy" id="9258"/>
    <lineage>
        <taxon>Eukaryota</taxon>
        <taxon>Metazoa</taxon>
        <taxon>Chordata</taxon>
        <taxon>Craniata</taxon>
        <taxon>Vertebrata</taxon>
        <taxon>Euteleostomi</taxon>
        <taxon>Mammalia</taxon>
        <taxon>Monotremata</taxon>
        <taxon>Ornithorhynchidae</taxon>
        <taxon>Ornithorhynchus</taxon>
    </lineage>
</organism>
<feature type="chain" id="PRO_0000144063" description="Amelogenin">
    <location>
        <begin position="1" status="less than"/>
        <end position="121" status="greater than"/>
    </location>
</feature>
<feature type="region of interest" description="Disordered" evidence="2">
    <location>
        <begin position="1"/>
        <end position="20"/>
    </location>
</feature>
<feature type="region of interest" description="Disordered" evidence="2">
    <location>
        <begin position="32"/>
        <end position="121"/>
    </location>
</feature>
<feature type="compositionally biased region" description="Polar residues" evidence="2">
    <location>
        <begin position="48"/>
        <end position="58"/>
    </location>
</feature>
<feature type="compositionally biased region" description="Low complexity" evidence="2">
    <location>
        <begin position="59"/>
        <end position="71"/>
    </location>
</feature>
<feature type="compositionally biased region" description="Pro residues" evidence="2">
    <location>
        <begin position="85"/>
        <end position="111"/>
    </location>
</feature>
<feature type="non-terminal residue">
    <location>
        <position position="1"/>
    </location>
</feature>
<feature type="non-terminal residue">
    <location>
        <position position="121"/>
    </location>
</feature>
<evidence type="ECO:0000250" key="1"/>
<evidence type="ECO:0000256" key="2">
    <source>
        <dbReference type="SAM" id="MobiDB-lite"/>
    </source>
</evidence>
<evidence type="ECO:0000305" key="3"/>
<gene>
    <name type="primary">AMEL</name>
</gene>
<comment type="function">
    <text evidence="1">Plays a role in the biomineralization of teeth. Seems to regulate the formation of crystallites during the secretory stage of tooth enamel development. Thought to play a major role in the structural organization and mineralization of developing enamel (By similarity).</text>
</comment>
<comment type="subcellular location">
    <subcellularLocation>
        <location>Secreted</location>
        <location>Extracellular space</location>
        <location>Extracellular matrix</location>
    </subcellularLocation>
</comment>
<comment type="similarity">
    <text evidence="3">Belongs to the amelogenin family.</text>
</comment>
<keyword id="KW-0091">Biomineralization</keyword>
<keyword id="KW-0272">Extracellular matrix</keyword>
<keyword id="KW-1185">Reference proteome</keyword>
<keyword id="KW-0677">Repeat</keyword>
<keyword id="KW-0964">Secreted</keyword>
<proteinExistence type="inferred from homology"/>
<sequence length="121" mass="13539">LHHQIIPVLSQQQTPTHALQPHHHIPVMAAQQPMQPQQPMMPMPGQPSVTPTQHHQSNLPQPAQQPFQPQVPQQPPHQPIQPQAPAHPMPPMPQPPLPPMFPMQPLPPLLPDLPLEQWPAT</sequence>
<reference key="1">
    <citation type="journal article" date="1998" name="Proc. Natl. Acad. Sci. U.S.A.">
        <title>Identification and characterization of amelogenin genes in monotremes, reptiles, and amphibians.</title>
        <authorList>
            <person name="Toyosawa S."/>
            <person name="O'Huigin C."/>
            <person name="Figueroa F."/>
            <person name="Tichy H."/>
            <person name="Klein J."/>
        </authorList>
    </citation>
    <scope>NUCLEOTIDE SEQUENCE [GENOMIC DNA]</scope>
</reference>
<name>AMEL_ORNAN</name>
<protein>
    <recommendedName>
        <fullName>Amelogenin</fullName>
    </recommendedName>
</protein>
<dbReference type="EMBL" id="AF095566">
    <property type="protein sequence ID" value="AAC78131.1"/>
    <property type="molecule type" value="Genomic_DNA"/>
</dbReference>
<dbReference type="STRING" id="9258.ENSOANP00000004174"/>
<dbReference type="eggNOG" id="ENOG502S4XP">
    <property type="taxonomic scope" value="Eukaryota"/>
</dbReference>
<dbReference type="InParanoid" id="O97646"/>
<dbReference type="Proteomes" id="UP000002279">
    <property type="component" value="Unplaced"/>
</dbReference>
<dbReference type="GO" id="GO:0062023">
    <property type="term" value="C:collagen-containing extracellular matrix"/>
    <property type="evidence" value="ECO:0000318"/>
    <property type="project" value="GO_Central"/>
</dbReference>
<dbReference type="GO" id="GO:0005576">
    <property type="term" value="C:extracellular region"/>
    <property type="evidence" value="ECO:0007669"/>
    <property type="project" value="UniProtKB-KW"/>
</dbReference>
<dbReference type="GO" id="GO:0030345">
    <property type="term" value="F:structural constituent of tooth enamel"/>
    <property type="evidence" value="ECO:0000318"/>
    <property type="project" value="GO_Central"/>
</dbReference>
<dbReference type="GO" id="GO:0070166">
    <property type="term" value="P:enamel mineralization"/>
    <property type="evidence" value="ECO:0000318"/>
    <property type="project" value="GO_Central"/>
</dbReference>
<dbReference type="InterPro" id="IPR004116">
    <property type="entry name" value="Amelogenin"/>
</dbReference>
<dbReference type="PANTHER" id="PTHR46794:SF2">
    <property type="entry name" value="AMELOGENIN, X ISOFORM"/>
    <property type="match status" value="1"/>
</dbReference>
<dbReference type="PANTHER" id="PTHR46794">
    <property type="entry name" value="AMELOGENIN, Y ISOFORM"/>
    <property type="match status" value="1"/>
</dbReference>
<dbReference type="Pfam" id="PF02948">
    <property type="entry name" value="Amelogenin"/>
    <property type="match status" value="1"/>
</dbReference>
<dbReference type="PRINTS" id="PR01757">
    <property type="entry name" value="AMELOGENIN"/>
</dbReference>
<dbReference type="SMART" id="SM00818">
    <property type="entry name" value="Amelogenin"/>
    <property type="match status" value="1"/>
</dbReference>
<accession>O97646</accession>